<dbReference type="EMBL" id="CP000813">
    <property type="protein sequence ID" value="ABV62659.1"/>
    <property type="molecule type" value="Genomic_DNA"/>
</dbReference>
<dbReference type="RefSeq" id="WP_003215573.1">
    <property type="nucleotide sequence ID" value="NZ_VEIS01000015.1"/>
</dbReference>
<dbReference type="SMR" id="A8FEJ2"/>
<dbReference type="STRING" id="315750.BPUM_1989"/>
<dbReference type="GeneID" id="5621255"/>
<dbReference type="KEGG" id="bpu:BPUM_1989"/>
<dbReference type="eggNOG" id="COG5582">
    <property type="taxonomic scope" value="Bacteria"/>
</dbReference>
<dbReference type="HOGENOM" id="CLU_126019_0_0_9"/>
<dbReference type="OrthoDB" id="2155814at2"/>
<dbReference type="Proteomes" id="UP000001355">
    <property type="component" value="Chromosome"/>
</dbReference>
<dbReference type="Gene3D" id="3.40.1530.30">
    <property type="entry name" value="Uncharacterised family UPF0302, N-terminal domain"/>
    <property type="match status" value="1"/>
</dbReference>
<dbReference type="Gene3D" id="4.10.810.10">
    <property type="entry name" value="Virus Scaffolding Protein, Chain A"/>
    <property type="match status" value="1"/>
</dbReference>
<dbReference type="HAMAP" id="MF_00760">
    <property type="entry name" value="UPF0302"/>
    <property type="match status" value="1"/>
</dbReference>
<dbReference type="InterPro" id="IPR014957">
    <property type="entry name" value="IDEAL_dom"/>
</dbReference>
<dbReference type="InterPro" id="IPR011188">
    <property type="entry name" value="UPF0302"/>
</dbReference>
<dbReference type="InterPro" id="IPR014963">
    <property type="entry name" value="UPF0302_N"/>
</dbReference>
<dbReference type="InterPro" id="IPR038091">
    <property type="entry name" value="UPF0302_N_sf"/>
</dbReference>
<dbReference type="InterPro" id="IPR027393">
    <property type="entry name" value="Virus_scaffolding_prot_C"/>
</dbReference>
<dbReference type="NCBIfam" id="NF002965">
    <property type="entry name" value="PRK03636.1"/>
    <property type="match status" value="1"/>
</dbReference>
<dbReference type="Pfam" id="PF08858">
    <property type="entry name" value="IDEAL"/>
    <property type="match status" value="1"/>
</dbReference>
<dbReference type="Pfam" id="PF08864">
    <property type="entry name" value="UPF0302"/>
    <property type="match status" value="1"/>
</dbReference>
<dbReference type="PIRSF" id="PIRSF007165">
    <property type="entry name" value="UCP007165"/>
    <property type="match status" value="1"/>
</dbReference>
<dbReference type="SMART" id="SM00914">
    <property type="entry name" value="IDEAL"/>
    <property type="match status" value="1"/>
</dbReference>
<sequence length="179" mass="21514">MQTPVSVNEKKEFIRWFLNHYQLKRRECVWILNYLMSHDSLMEKVHFVEQAEFCPRGIIMSTHCVDEVPFRFYKENIMTTDAEKSFHDIRLNKQQDLFIQLNFRSAYRSPEYAAVLETNPHIPKDLYENEKDKDLAEKVLEHSIATFQKERLMKEIDEALDRHDQETFNKLARELSLLS</sequence>
<reference key="1">
    <citation type="journal article" date="2007" name="PLoS ONE">
        <title>Paradoxical DNA repair and peroxide resistance gene conservation in Bacillus pumilus SAFR-032.</title>
        <authorList>
            <person name="Gioia J."/>
            <person name="Yerrapragada S."/>
            <person name="Qin X."/>
            <person name="Jiang H."/>
            <person name="Igboeli O.C."/>
            <person name="Muzny D."/>
            <person name="Dugan-Rocha S."/>
            <person name="Ding Y."/>
            <person name="Hawes A."/>
            <person name="Liu W."/>
            <person name="Perez L."/>
            <person name="Kovar C."/>
            <person name="Dinh H."/>
            <person name="Lee S."/>
            <person name="Nazareth L."/>
            <person name="Blyth P."/>
            <person name="Holder M."/>
            <person name="Buhay C."/>
            <person name="Tirumalai M.R."/>
            <person name="Liu Y."/>
            <person name="Dasgupta I."/>
            <person name="Bokhetache L."/>
            <person name="Fujita M."/>
            <person name="Karouia F."/>
            <person name="Eswara Moorthy P."/>
            <person name="Siefert J."/>
            <person name="Uzman A."/>
            <person name="Buzumbo P."/>
            <person name="Verma A."/>
            <person name="Zwiya H."/>
            <person name="McWilliams B.D."/>
            <person name="Olowu A."/>
            <person name="Clinkenbeard K.D."/>
            <person name="Newcombe D."/>
            <person name="Golebiewski L."/>
            <person name="Petrosino J.F."/>
            <person name="Nicholson W.L."/>
            <person name="Fox G.E."/>
            <person name="Venkateswaran K."/>
            <person name="Highlander S.K."/>
            <person name="Weinstock G.M."/>
        </authorList>
    </citation>
    <scope>NUCLEOTIDE SEQUENCE [LARGE SCALE GENOMIC DNA]</scope>
    <source>
        <strain>SAFR-032</strain>
    </source>
</reference>
<protein>
    <recommendedName>
        <fullName evidence="1">UPF0302 protein BPUM_1989</fullName>
    </recommendedName>
</protein>
<feature type="chain" id="PRO_1000062207" description="UPF0302 protein BPUM_1989">
    <location>
        <begin position="1"/>
        <end position="179"/>
    </location>
</feature>
<name>Y1989_BACP2</name>
<evidence type="ECO:0000255" key="1">
    <source>
        <dbReference type="HAMAP-Rule" id="MF_00760"/>
    </source>
</evidence>
<comment type="similarity">
    <text evidence="1">Belongs to the UPF0302 family.</text>
</comment>
<accession>A8FEJ2</accession>
<organism>
    <name type="scientific">Bacillus pumilus (strain SAFR-032)</name>
    <dbReference type="NCBI Taxonomy" id="315750"/>
    <lineage>
        <taxon>Bacteria</taxon>
        <taxon>Bacillati</taxon>
        <taxon>Bacillota</taxon>
        <taxon>Bacilli</taxon>
        <taxon>Bacillales</taxon>
        <taxon>Bacillaceae</taxon>
        <taxon>Bacillus</taxon>
    </lineage>
</organism>
<gene>
    <name type="ordered locus">BPUM_1989</name>
</gene>
<proteinExistence type="inferred from homology"/>